<comment type="function">
    <text evidence="1">Catalyzes the attachment of isoleucine to tRNA(Ile). As IleRS can inadvertently accommodate and process structurally similar amino acids such as valine, to avoid such errors it has two additional distinct tRNA(Ile)-dependent editing activities. One activity is designated as 'pretransfer' editing and involves the hydrolysis of activated Val-AMP. The other activity is designated 'posttransfer' editing and involves deacylation of mischarged Val-tRNA(Ile).</text>
</comment>
<comment type="catalytic activity">
    <reaction evidence="1">
        <text>tRNA(Ile) + L-isoleucine + ATP = L-isoleucyl-tRNA(Ile) + AMP + diphosphate</text>
        <dbReference type="Rhea" id="RHEA:11060"/>
        <dbReference type="Rhea" id="RHEA-COMP:9666"/>
        <dbReference type="Rhea" id="RHEA-COMP:9695"/>
        <dbReference type="ChEBI" id="CHEBI:30616"/>
        <dbReference type="ChEBI" id="CHEBI:33019"/>
        <dbReference type="ChEBI" id="CHEBI:58045"/>
        <dbReference type="ChEBI" id="CHEBI:78442"/>
        <dbReference type="ChEBI" id="CHEBI:78528"/>
        <dbReference type="ChEBI" id="CHEBI:456215"/>
        <dbReference type="EC" id="6.1.1.5"/>
    </reaction>
</comment>
<comment type="cofactor">
    <cofactor evidence="1">
        <name>Zn(2+)</name>
        <dbReference type="ChEBI" id="CHEBI:29105"/>
    </cofactor>
    <text evidence="1">Binds 1 zinc ion per subunit.</text>
</comment>
<comment type="subunit">
    <text evidence="1">Monomer.</text>
</comment>
<comment type="subcellular location">
    <subcellularLocation>
        <location evidence="1">Cytoplasm</location>
    </subcellularLocation>
</comment>
<comment type="domain">
    <text evidence="1">IleRS has two distinct active sites: one for aminoacylation and one for editing. The misactivated valine is translocated from the active site to the editing site, which sterically excludes the correctly activated isoleucine. The single editing site contains two valyl binding pockets, one specific for each substrate (Val-AMP or Val-tRNA(Ile)).</text>
</comment>
<comment type="similarity">
    <text evidence="1">Belongs to the class-I aminoacyl-tRNA synthetase family. IleS type 1 subfamily.</text>
</comment>
<protein>
    <recommendedName>
        <fullName evidence="1">Isoleucine--tRNA ligase</fullName>
        <ecNumber evidence="1">6.1.1.5</ecNumber>
    </recommendedName>
    <alternativeName>
        <fullName evidence="1">Isoleucyl-tRNA synthetase</fullName>
        <shortName evidence="1">IleRS</shortName>
    </alternativeName>
</protein>
<name>SYI_MESHJ</name>
<organism>
    <name type="scientific">Mesomycoplasma hyopneumoniae (strain J / ATCC 25934 / NCTC 10110)</name>
    <name type="common">Mycoplasma hyopneumoniae</name>
    <dbReference type="NCBI Taxonomy" id="262719"/>
    <lineage>
        <taxon>Bacteria</taxon>
        <taxon>Bacillati</taxon>
        <taxon>Mycoplasmatota</taxon>
        <taxon>Mycoplasmoidales</taxon>
        <taxon>Metamycoplasmataceae</taxon>
        <taxon>Mesomycoplasma</taxon>
    </lineage>
</organism>
<proteinExistence type="inferred from homology"/>
<keyword id="KW-0030">Aminoacyl-tRNA synthetase</keyword>
<keyword id="KW-0067">ATP-binding</keyword>
<keyword id="KW-0963">Cytoplasm</keyword>
<keyword id="KW-0436">Ligase</keyword>
<keyword id="KW-0479">Metal-binding</keyword>
<keyword id="KW-0547">Nucleotide-binding</keyword>
<keyword id="KW-0648">Protein biosynthesis</keyword>
<keyword id="KW-0862">Zinc</keyword>
<accession>Q4AAS1</accession>
<dbReference type="EC" id="6.1.1.5" evidence="1"/>
<dbReference type="EMBL" id="AE017243">
    <property type="protein sequence ID" value="AAZ44122.2"/>
    <property type="molecule type" value="Genomic_DNA"/>
</dbReference>
<dbReference type="RefSeq" id="WP_044284566.1">
    <property type="nucleotide sequence ID" value="NC_007295.1"/>
</dbReference>
<dbReference type="SMR" id="Q4AAS1"/>
<dbReference type="GeneID" id="41334315"/>
<dbReference type="KEGG" id="mhj:MHJ_0028"/>
<dbReference type="eggNOG" id="COG0060">
    <property type="taxonomic scope" value="Bacteria"/>
</dbReference>
<dbReference type="HOGENOM" id="CLU_001493_7_1_14"/>
<dbReference type="OrthoDB" id="9810365at2"/>
<dbReference type="Proteomes" id="UP000000548">
    <property type="component" value="Chromosome"/>
</dbReference>
<dbReference type="GO" id="GO:0005829">
    <property type="term" value="C:cytosol"/>
    <property type="evidence" value="ECO:0007669"/>
    <property type="project" value="TreeGrafter"/>
</dbReference>
<dbReference type="GO" id="GO:0002161">
    <property type="term" value="F:aminoacyl-tRNA deacylase activity"/>
    <property type="evidence" value="ECO:0007669"/>
    <property type="project" value="InterPro"/>
</dbReference>
<dbReference type="GO" id="GO:0005524">
    <property type="term" value="F:ATP binding"/>
    <property type="evidence" value="ECO:0007669"/>
    <property type="project" value="UniProtKB-UniRule"/>
</dbReference>
<dbReference type="GO" id="GO:0004822">
    <property type="term" value="F:isoleucine-tRNA ligase activity"/>
    <property type="evidence" value="ECO:0007669"/>
    <property type="project" value="UniProtKB-UniRule"/>
</dbReference>
<dbReference type="GO" id="GO:0000049">
    <property type="term" value="F:tRNA binding"/>
    <property type="evidence" value="ECO:0007669"/>
    <property type="project" value="InterPro"/>
</dbReference>
<dbReference type="GO" id="GO:0008270">
    <property type="term" value="F:zinc ion binding"/>
    <property type="evidence" value="ECO:0007669"/>
    <property type="project" value="UniProtKB-UniRule"/>
</dbReference>
<dbReference type="GO" id="GO:0006428">
    <property type="term" value="P:isoleucyl-tRNA aminoacylation"/>
    <property type="evidence" value="ECO:0007669"/>
    <property type="project" value="UniProtKB-UniRule"/>
</dbReference>
<dbReference type="CDD" id="cd07960">
    <property type="entry name" value="Anticodon_Ia_Ile_BEm"/>
    <property type="match status" value="1"/>
</dbReference>
<dbReference type="CDD" id="cd00818">
    <property type="entry name" value="IleRS_core"/>
    <property type="match status" value="1"/>
</dbReference>
<dbReference type="FunFam" id="3.40.50.620:FF:000152">
    <property type="entry name" value="Isoleucine--tRNA ligase"/>
    <property type="match status" value="1"/>
</dbReference>
<dbReference type="Gene3D" id="1.10.730.20">
    <property type="match status" value="1"/>
</dbReference>
<dbReference type="Gene3D" id="3.40.50.620">
    <property type="entry name" value="HUPs"/>
    <property type="match status" value="2"/>
</dbReference>
<dbReference type="Gene3D" id="1.10.10.830">
    <property type="entry name" value="Ile-tRNA synthetase CP2 domain-like"/>
    <property type="match status" value="1"/>
</dbReference>
<dbReference type="HAMAP" id="MF_02002">
    <property type="entry name" value="Ile_tRNA_synth_type1"/>
    <property type="match status" value="1"/>
</dbReference>
<dbReference type="InterPro" id="IPR001412">
    <property type="entry name" value="aa-tRNA-synth_I_CS"/>
</dbReference>
<dbReference type="InterPro" id="IPR002300">
    <property type="entry name" value="aa-tRNA-synth_Ia"/>
</dbReference>
<dbReference type="InterPro" id="IPR033708">
    <property type="entry name" value="Anticodon_Ile_BEm"/>
</dbReference>
<dbReference type="InterPro" id="IPR002301">
    <property type="entry name" value="Ile-tRNA-ligase"/>
</dbReference>
<dbReference type="InterPro" id="IPR023585">
    <property type="entry name" value="Ile-tRNA-ligase_type1"/>
</dbReference>
<dbReference type="InterPro" id="IPR050081">
    <property type="entry name" value="Ile-tRNA_ligase"/>
</dbReference>
<dbReference type="InterPro" id="IPR013155">
    <property type="entry name" value="M/V/L/I-tRNA-synth_anticd-bd"/>
</dbReference>
<dbReference type="InterPro" id="IPR014729">
    <property type="entry name" value="Rossmann-like_a/b/a_fold"/>
</dbReference>
<dbReference type="InterPro" id="IPR009080">
    <property type="entry name" value="tRNAsynth_Ia_anticodon-bd"/>
</dbReference>
<dbReference type="InterPro" id="IPR009008">
    <property type="entry name" value="Val/Leu/Ile-tRNA-synth_edit"/>
</dbReference>
<dbReference type="NCBIfam" id="TIGR00392">
    <property type="entry name" value="ileS"/>
    <property type="match status" value="1"/>
</dbReference>
<dbReference type="PANTHER" id="PTHR42765:SF1">
    <property type="entry name" value="ISOLEUCINE--TRNA LIGASE, MITOCHONDRIAL"/>
    <property type="match status" value="1"/>
</dbReference>
<dbReference type="PANTHER" id="PTHR42765">
    <property type="entry name" value="SOLEUCYL-TRNA SYNTHETASE"/>
    <property type="match status" value="1"/>
</dbReference>
<dbReference type="Pfam" id="PF08264">
    <property type="entry name" value="Anticodon_1"/>
    <property type="match status" value="1"/>
</dbReference>
<dbReference type="Pfam" id="PF00133">
    <property type="entry name" value="tRNA-synt_1"/>
    <property type="match status" value="1"/>
</dbReference>
<dbReference type="PRINTS" id="PR00984">
    <property type="entry name" value="TRNASYNTHILE"/>
</dbReference>
<dbReference type="SUPFAM" id="SSF47323">
    <property type="entry name" value="Anticodon-binding domain of a subclass of class I aminoacyl-tRNA synthetases"/>
    <property type="match status" value="1"/>
</dbReference>
<dbReference type="SUPFAM" id="SSF52374">
    <property type="entry name" value="Nucleotidylyl transferase"/>
    <property type="match status" value="1"/>
</dbReference>
<dbReference type="SUPFAM" id="SSF50677">
    <property type="entry name" value="ValRS/IleRS/LeuRS editing domain"/>
    <property type="match status" value="1"/>
</dbReference>
<dbReference type="PROSITE" id="PS00178">
    <property type="entry name" value="AA_TRNA_LIGASE_I"/>
    <property type="match status" value="1"/>
</dbReference>
<feature type="chain" id="PRO_0000098420" description="Isoleucine--tRNA ligase">
    <location>
        <begin position="1"/>
        <end position="886"/>
    </location>
</feature>
<feature type="short sequence motif" description="'HIGH' region">
    <location>
        <begin position="60"/>
        <end position="70"/>
    </location>
</feature>
<feature type="short sequence motif" description="'KMSKS' region">
    <location>
        <begin position="587"/>
        <end position="591"/>
    </location>
</feature>
<feature type="binding site" evidence="1">
    <location>
        <position position="546"/>
    </location>
    <ligand>
        <name>L-isoleucyl-5'-AMP</name>
        <dbReference type="ChEBI" id="CHEBI:178002"/>
    </ligand>
</feature>
<feature type="binding site" evidence="1">
    <location>
        <position position="590"/>
    </location>
    <ligand>
        <name>ATP</name>
        <dbReference type="ChEBI" id="CHEBI:30616"/>
    </ligand>
</feature>
<feature type="binding site" evidence="1">
    <location>
        <position position="856"/>
    </location>
    <ligand>
        <name>Zn(2+)</name>
        <dbReference type="ChEBI" id="CHEBI:29105"/>
    </ligand>
</feature>
<feature type="binding site" evidence="1">
    <location>
        <position position="859"/>
    </location>
    <ligand>
        <name>Zn(2+)</name>
        <dbReference type="ChEBI" id="CHEBI:29105"/>
    </ligand>
</feature>
<feature type="binding site" evidence="1">
    <location>
        <position position="870"/>
    </location>
    <ligand>
        <name>Zn(2+)</name>
        <dbReference type="ChEBI" id="CHEBI:29105"/>
    </ligand>
</feature>
<feature type="binding site" evidence="1">
    <location>
        <position position="873"/>
    </location>
    <ligand>
        <name>Zn(2+)</name>
        <dbReference type="ChEBI" id="CHEBI:29105"/>
    </ligand>
</feature>
<sequence length="886" mass="104050">MDKNFYKNSLNIFNSNFSMKANLSEKDKFYADFWEKNQIYQQILRKRRGNPRFILHDGPPYANGDIHIGHALNKILKDIIVRYKTMAGFYSPFVPGWDTHGLPIENKIINQIGSKSTLEIRRKSNDFANSQILAQMKQFKKLNLLTDFKQIYQTNTPNYEAKQLKLFKKMVSRGLVYRALKPVYWSPSSQSALAEAEIEYLEYRSPSLFTSFDIKKGNNFVAENDKLIIWTTTPWTLIANSGVAVGENFDYVRIKNGENFYVLAANLLEKLAVIFDWKHYEIIDNFPGRAILGIKYLHPIFEKICPIVSGNHVSLDVGSGLVHLAPLFGEDDYWIGRENNLEMVMHVNDDGKFNENAGQFSGQFYADSNKLITEFLEKKSKILHLSFIDHSFPHDWRTLKPVIYRGTPQWFVSIEKIKKDLEKAIEEIEFPENWLKKRLTKMVVERKDWLISRQRSWGIPLIIFYDQNKDPVLDKPEIFDYIISLVEKFGSRIWYEKTTDELLPEKYQNLGWTKENDILDVWFDSGVSFFAANISDEKPPFDIYFEGSDQYRGWFNSSLINSVIYFGFSPYKKLLSHGFVVDAKGNKMSKSRGNGVDPLLILSKYGCDIFRLWVANSEYYNDIVYSEAIFEQNVEIYRKIRNTVRFLITNLADFKPTKYELTEVDLYIFNKIQKLKNEIIQNYDQNRFVRVVKIINNFIIEFSNFYLSIVKDILYADKKESLKRRQVQYNLYELLQVLNIAIAPIMPTTAEEIYSFIQKNNKQISVHMEEFFKESHFDEELDAKWNEFFQIKDSVYQLIEQKIKSKEIKRPNEVGVLLKTDSDFIKSIDLKKLLMVAKVEFSNGKTEILQLNWEKCPRCWNHFEKINKVCARCFEVLSEIVPEKNS</sequence>
<gene>
    <name evidence="1" type="primary">ileS</name>
    <name type="ordered locus">MHJ_0028</name>
</gene>
<reference key="1">
    <citation type="journal article" date="2005" name="J. Bacteriol.">
        <title>Swine and poultry pathogens: the complete genome sequences of two strains of Mycoplasma hyopneumoniae and a strain of Mycoplasma synoviae.</title>
        <authorList>
            <person name="Vasconcelos A.T.R."/>
            <person name="Ferreira H.B."/>
            <person name="Bizarro C.V."/>
            <person name="Bonatto S.L."/>
            <person name="Carvalho M.O."/>
            <person name="Pinto P.M."/>
            <person name="Almeida D.F."/>
            <person name="Almeida L.G.P."/>
            <person name="Almeida R."/>
            <person name="Alves-Junior L."/>
            <person name="Assuncao E.N."/>
            <person name="Azevedo V.A.C."/>
            <person name="Bogo M.R."/>
            <person name="Brigido M.M."/>
            <person name="Brocchi M."/>
            <person name="Burity H.A."/>
            <person name="Camargo A.A."/>
            <person name="Camargo S.S."/>
            <person name="Carepo M.S."/>
            <person name="Carraro D.M."/>
            <person name="de Mattos Cascardo J.C."/>
            <person name="Castro L.A."/>
            <person name="Cavalcanti G."/>
            <person name="Chemale G."/>
            <person name="Collevatti R.G."/>
            <person name="Cunha C.W."/>
            <person name="Dallagiovanna B."/>
            <person name="Dambros B.P."/>
            <person name="Dellagostin O.A."/>
            <person name="Falcao C."/>
            <person name="Fantinatti-Garboggini F."/>
            <person name="Felipe M.S.S."/>
            <person name="Fiorentin L."/>
            <person name="Franco G.R."/>
            <person name="Freitas N.S.A."/>
            <person name="Frias D."/>
            <person name="Grangeiro T.B."/>
            <person name="Grisard E.C."/>
            <person name="Guimaraes C.T."/>
            <person name="Hungria M."/>
            <person name="Jardim S.N."/>
            <person name="Krieger M.A."/>
            <person name="Laurino J.P."/>
            <person name="Lima L.F.A."/>
            <person name="Lopes M.I."/>
            <person name="Loreto E.L.S."/>
            <person name="Madeira H.M.F."/>
            <person name="Manfio G.P."/>
            <person name="Maranhao A.Q."/>
            <person name="Martinkovics C.T."/>
            <person name="Medeiros S.R.B."/>
            <person name="Moreira M.A.M."/>
            <person name="Neiva M."/>
            <person name="Ramalho-Neto C.E."/>
            <person name="Nicolas M.F."/>
            <person name="Oliveira S.C."/>
            <person name="Paixao R.F.C."/>
            <person name="Pedrosa F.O."/>
            <person name="Pena S.D.J."/>
            <person name="Pereira M."/>
            <person name="Pereira-Ferrari L."/>
            <person name="Piffer I."/>
            <person name="Pinto L.S."/>
            <person name="Potrich D.P."/>
            <person name="Salim A.C.M."/>
            <person name="Santos F.R."/>
            <person name="Schmitt R."/>
            <person name="Schneider M.P.C."/>
            <person name="Schrank A."/>
            <person name="Schrank I.S."/>
            <person name="Schuck A.F."/>
            <person name="Seuanez H.N."/>
            <person name="Silva D.W."/>
            <person name="Silva R."/>
            <person name="Silva S.C."/>
            <person name="Soares C.M.A."/>
            <person name="Souza K.R.L."/>
            <person name="Souza R.C."/>
            <person name="Staats C.C."/>
            <person name="Steffens M.B.R."/>
            <person name="Teixeira S.M.R."/>
            <person name="Urmenyi T.P."/>
            <person name="Vainstein M.H."/>
            <person name="Zuccherato L.W."/>
            <person name="Simpson A.J.G."/>
            <person name="Zaha A."/>
        </authorList>
    </citation>
    <scope>NUCLEOTIDE SEQUENCE [LARGE SCALE GENOMIC DNA]</scope>
    <source>
        <strain>J / ATCC 25934 / NCTC 10110</strain>
    </source>
</reference>
<evidence type="ECO:0000255" key="1">
    <source>
        <dbReference type="HAMAP-Rule" id="MF_02002"/>
    </source>
</evidence>